<comment type="similarity">
    <text evidence="1">Belongs to the bacterial ribosomal protein bS16 family.</text>
</comment>
<gene>
    <name evidence="1" type="primary">rpsP</name>
    <name type="ordered locus">lp_1636</name>
</gene>
<proteinExistence type="inferred from homology"/>
<protein>
    <recommendedName>
        <fullName evidence="1">Small ribosomal subunit protein bS16</fullName>
    </recommendedName>
    <alternativeName>
        <fullName evidence="2">30S ribosomal protein S16</fullName>
    </alternativeName>
</protein>
<reference key="1">
    <citation type="journal article" date="2003" name="Proc. Natl. Acad. Sci. U.S.A.">
        <title>Complete genome sequence of Lactobacillus plantarum WCFS1.</title>
        <authorList>
            <person name="Kleerebezem M."/>
            <person name="Boekhorst J."/>
            <person name="van Kranenburg R."/>
            <person name="Molenaar D."/>
            <person name="Kuipers O.P."/>
            <person name="Leer R."/>
            <person name="Tarchini R."/>
            <person name="Peters S.A."/>
            <person name="Sandbrink H.M."/>
            <person name="Fiers M.W.E.J."/>
            <person name="Stiekema W."/>
            <person name="Klein Lankhorst R.M."/>
            <person name="Bron P.A."/>
            <person name="Hoffer S.M."/>
            <person name="Nierop Groot M.N."/>
            <person name="Kerkhoven R."/>
            <person name="De Vries M."/>
            <person name="Ursing B."/>
            <person name="De Vos W.M."/>
            <person name="Siezen R.J."/>
        </authorList>
    </citation>
    <scope>NUCLEOTIDE SEQUENCE [LARGE SCALE GENOMIC DNA]</scope>
    <source>
        <strain>ATCC BAA-793 / NCIMB 8826 / WCFS1</strain>
    </source>
</reference>
<reference key="2">
    <citation type="journal article" date="2012" name="J. Bacteriol.">
        <title>Complete resequencing and reannotation of the Lactobacillus plantarum WCFS1 genome.</title>
        <authorList>
            <person name="Siezen R.J."/>
            <person name="Francke C."/>
            <person name="Renckens B."/>
            <person name="Boekhorst J."/>
            <person name="Wels M."/>
            <person name="Kleerebezem M."/>
            <person name="van Hijum S.A."/>
        </authorList>
    </citation>
    <scope>NUCLEOTIDE SEQUENCE [LARGE SCALE GENOMIC DNA]</scope>
    <scope>GENOME REANNOTATION</scope>
    <source>
        <strain>ATCC BAA-793 / NCIMB 8826 / WCFS1</strain>
    </source>
</reference>
<feature type="chain" id="PRO_0000167198" description="Small ribosomal subunit protein bS16">
    <location>
        <begin position="1"/>
        <end position="90"/>
    </location>
</feature>
<evidence type="ECO:0000255" key="1">
    <source>
        <dbReference type="HAMAP-Rule" id="MF_00385"/>
    </source>
</evidence>
<evidence type="ECO:0000305" key="2"/>
<dbReference type="EMBL" id="AL935263">
    <property type="protein sequence ID" value="CCC78947.1"/>
    <property type="molecule type" value="Genomic_DNA"/>
</dbReference>
<dbReference type="RefSeq" id="WP_003638633.1">
    <property type="nucleotide sequence ID" value="NC_004567.2"/>
</dbReference>
<dbReference type="RefSeq" id="YP_004889461.1">
    <property type="nucleotide sequence ID" value="NC_004567.2"/>
</dbReference>
<dbReference type="SMR" id="Q88WJ5"/>
<dbReference type="STRING" id="220668.lp_1636"/>
<dbReference type="EnsemblBacteria" id="CCC78947">
    <property type="protein sequence ID" value="CCC78947"/>
    <property type="gene ID" value="lp_1636"/>
</dbReference>
<dbReference type="GeneID" id="89669016"/>
<dbReference type="KEGG" id="lpl:lp_1636"/>
<dbReference type="PATRIC" id="fig|220668.9.peg.1383"/>
<dbReference type="eggNOG" id="COG0228">
    <property type="taxonomic scope" value="Bacteria"/>
</dbReference>
<dbReference type="HOGENOM" id="CLU_100590_5_0_9"/>
<dbReference type="OrthoDB" id="9807878at2"/>
<dbReference type="PhylomeDB" id="Q88WJ5"/>
<dbReference type="Proteomes" id="UP000000432">
    <property type="component" value="Chromosome"/>
</dbReference>
<dbReference type="GO" id="GO:0005737">
    <property type="term" value="C:cytoplasm"/>
    <property type="evidence" value="ECO:0007669"/>
    <property type="project" value="UniProtKB-ARBA"/>
</dbReference>
<dbReference type="GO" id="GO:0015935">
    <property type="term" value="C:small ribosomal subunit"/>
    <property type="evidence" value="ECO:0007669"/>
    <property type="project" value="TreeGrafter"/>
</dbReference>
<dbReference type="GO" id="GO:0003735">
    <property type="term" value="F:structural constituent of ribosome"/>
    <property type="evidence" value="ECO:0007669"/>
    <property type="project" value="InterPro"/>
</dbReference>
<dbReference type="GO" id="GO:0006412">
    <property type="term" value="P:translation"/>
    <property type="evidence" value="ECO:0007669"/>
    <property type="project" value="UniProtKB-UniRule"/>
</dbReference>
<dbReference type="FunFam" id="3.30.1320.10:FF:000002">
    <property type="entry name" value="30S ribosomal protein S16"/>
    <property type="match status" value="1"/>
</dbReference>
<dbReference type="Gene3D" id="3.30.1320.10">
    <property type="match status" value="1"/>
</dbReference>
<dbReference type="HAMAP" id="MF_00385">
    <property type="entry name" value="Ribosomal_bS16"/>
    <property type="match status" value="1"/>
</dbReference>
<dbReference type="InterPro" id="IPR000307">
    <property type="entry name" value="Ribosomal_bS16"/>
</dbReference>
<dbReference type="InterPro" id="IPR023803">
    <property type="entry name" value="Ribosomal_bS16_dom_sf"/>
</dbReference>
<dbReference type="NCBIfam" id="TIGR00002">
    <property type="entry name" value="S16"/>
    <property type="match status" value="1"/>
</dbReference>
<dbReference type="PANTHER" id="PTHR12919">
    <property type="entry name" value="30S RIBOSOMAL PROTEIN S16"/>
    <property type="match status" value="1"/>
</dbReference>
<dbReference type="PANTHER" id="PTHR12919:SF20">
    <property type="entry name" value="SMALL RIBOSOMAL SUBUNIT PROTEIN BS16M"/>
    <property type="match status" value="1"/>
</dbReference>
<dbReference type="Pfam" id="PF00886">
    <property type="entry name" value="Ribosomal_S16"/>
    <property type="match status" value="1"/>
</dbReference>
<dbReference type="SUPFAM" id="SSF54565">
    <property type="entry name" value="Ribosomal protein S16"/>
    <property type="match status" value="1"/>
</dbReference>
<sequence>MSVKIRLKRMGSKKNPFYRIVVADSRSPRDGRFIAQVGTYNPLTEPAQVKLEEEDILGWLNNGAQPSDTVKNILSKAGIMKKYHEAKFTK</sequence>
<accession>Q88WJ5</accession>
<accession>F9UP08</accession>
<name>RS16_LACPL</name>
<keyword id="KW-1185">Reference proteome</keyword>
<keyword id="KW-0687">Ribonucleoprotein</keyword>
<keyword id="KW-0689">Ribosomal protein</keyword>
<organism>
    <name type="scientific">Lactiplantibacillus plantarum (strain ATCC BAA-793 / NCIMB 8826 / WCFS1)</name>
    <name type="common">Lactobacillus plantarum</name>
    <dbReference type="NCBI Taxonomy" id="220668"/>
    <lineage>
        <taxon>Bacteria</taxon>
        <taxon>Bacillati</taxon>
        <taxon>Bacillota</taxon>
        <taxon>Bacilli</taxon>
        <taxon>Lactobacillales</taxon>
        <taxon>Lactobacillaceae</taxon>
        <taxon>Lactiplantibacillus</taxon>
    </lineage>
</organism>